<comment type="catalytic activity">
    <reaction evidence="1">
        <text>tRNA(His) + L-histidine + ATP = L-histidyl-tRNA(His) + AMP + diphosphate + H(+)</text>
        <dbReference type="Rhea" id="RHEA:17313"/>
        <dbReference type="Rhea" id="RHEA-COMP:9665"/>
        <dbReference type="Rhea" id="RHEA-COMP:9689"/>
        <dbReference type="ChEBI" id="CHEBI:15378"/>
        <dbReference type="ChEBI" id="CHEBI:30616"/>
        <dbReference type="ChEBI" id="CHEBI:33019"/>
        <dbReference type="ChEBI" id="CHEBI:57595"/>
        <dbReference type="ChEBI" id="CHEBI:78442"/>
        <dbReference type="ChEBI" id="CHEBI:78527"/>
        <dbReference type="ChEBI" id="CHEBI:456215"/>
        <dbReference type="EC" id="6.1.1.21"/>
    </reaction>
</comment>
<comment type="subunit">
    <text evidence="1">Homodimer.</text>
</comment>
<comment type="subcellular location">
    <subcellularLocation>
        <location evidence="1">Cytoplasm</location>
    </subcellularLocation>
</comment>
<comment type="similarity">
    <text evidence="1">Belongs to the class-II aminoacyl-tRNA synthetase family.</text>
</comment>
<protein>
    <recommendedName>
        <fullName evidence="1">Histidine--tRNA ligase</fullName>
        <ecNumber evidence="1">6.1.1.21</ecNumber>
    </recommendedName>
    <alternativeName>
        <fullName evidence="1">Histidyl-tRNA synthetase</fullName>
        <shortName evidence="1">HisRS</shortName>
    </alternativeName>
</protein>
<organism>
    <name type="scientific">Salmonella gallinarum (strain 287/91 / NCTC 13346)</name>
    <dbReference type="NCBI Taxonomy" id="550538"/>
    <lineage>
        <taxon>Bacteria</taxon>
        <taxon>Pseudomonadati</taxon>
        <taxon>Pseudomonadota</taxon>
        <taxon>Gammaproteobacteria</taxon>
        <taxon>Enterobacterales</taxon>
        <taxon>Enterobacteriaceae</taxon>
        <taxon>Salmonella</taxon>
    </lineage>
</organism>
<accession>B5RCZ1</accession>
<feature type="chain" id="PRO_1000095587" description="Histidine--tRNA ligase">
    <location>
        <begin position="1"/>
        <end position="424"/>
    </location>
</feature>
<proteinExistence type="inferred from homology"/>
<sequence>MAKNIQAIRGMKDYLPGETAIWQRIEGTLKNVLGSYGYSEIRLPIVEQTPLFKRAIGEVTDVVEKEMYTFEDRNGDSLTLRPEGTAGCVRAGIEHGLLYNQEQRLWYIGPMFRHERPQKGRYRQFHQLGAEVFGLQGPDIDAELIMLTARWWRALGISEHVSLELNSIGSLEARANYRDALVAFLEQHQETLDEDCKRRMYTNPLRVLDSKNPDVQALLNDAPALGDYLDDDSREHFAGLCKLLDAAGIAYTVNQRLVRGLDYYNRTVFEWVTNSLGSQGTVCAGGRYDGLVEQLGGRATPAVGFAMGLERLVLLVQAVNPEFIASPVVDIYLVAAGAQTQSAAMTLAERLRDEMPGVKLMTNHGGGNFKKQFARADKWDARIALVLGESEVADGTVVVKDLRSGEQTAVAQDSVAAHLRTLLG</sequence>
<keyword id="KW-0030">Aminoacyl-tRNA synthetase</keyword>
<keyword id="KW-0067">ATP-binding</keyword>
<keyword id="KW-0963">Cytoplasm</keyword>
<keyword id="KW-0436">Ligase</keyword>
<keyword id="KW-0547">Nucleotide-binding</keyword>
<keyword id="KW-0648">Protein biosynthesis</keyword>
<evidence type="ECO:0000255" key="1">
    <source>
        <dbReference type="HAMAP-Rule" id="MF_00127"/>
    </source>
</evidence>
<name>SYH_SALG2</name>
<reference key="1">
    <citation type="journal article" date="2008" name="Genome Res.">
        <title>Comparative genome analysis of Salmonella enteritidis PT4 and Salmonella gallinarum 287/91 provides insights into evolutionary and host adaptation pathways.</title>
        <authorList>
            <person name="Thomson N.R."/>
            <person name="Clayton D.J."/>
            <person name="Windhorst D."/>
            <person name="Vernikos G."/>
            <person name="Davidson S."/>
            <person name="Churcher C."/>
            <person name="Quail M.A."/>
            <person name="Stevens M."/>
            <person name="Jones M.A."/>
            <person name="Watson M."/>
            <person name="Barron A."/>
            <person name="Layton A."/>
            <person name="Pickard D."/>
            <person name="Kingsley R.A."/>
            <person name="Bignell A."/>
            <person name="Clark L."/>
            <person name="Harris B."/>
            <person name="Ormond D."/>
            <person name="Abdellah Z."/>
            <person name="Brooks K."/>
            <person name="Cherevach I."/>
            <person name="Chillingworth T."/>
            <person name="Woodward J."/>
            <person name="Norberczak H."/>
            <person name="Lord A."/>
            <person name="Arrowsmith C."/>
            <person name="Jagels K."/>
            <person name="Moule S."/>
            <person name="Mungall K."/>
            <person name="Saunders M."/>
            <person name="Whitehead S."/>
            <person name="Chabalgoity J.A."/>
            <person name="Maskell D."/>
            <person name="Humphreys T."/>
            <person name="Roberts M."/>
            <person name="Barrow P.A."/>
            <person name="Dougan G."/>
            <person name="Parkhill J."/>
        </authorList>
    </citation>
    <scope>NUCLEOTIDE SEQUENCE [LARGE SCALE GENOMIC DNA]</scope>
    <source>
        <strain>287/91 / NCTC 13346</strain>
    </source>
</reference>
<gene>
    <name evidence="1" type="primary">hisS</name>
    <name type="ordered locus">SG2557</name>
</gene>
<dbReference type="EC" id="6.1.1.21" evidence="1"/>
<dbReference type="EMBL" id="AM933173">
    <property type="protein sequence ID" value="CAR38377.1"/>
    <property type="molecule type" value="Genomic_DNA"/>
</dbReference>
<dbReference type="RefSeq" id="WP_001107133.1">
    <property type="nucleotide sequence ID" value="NC_011274.1"/>
</dbReference>
<dbReference type="SMR" id="B5RCZ1"/>
<dbReference type="KEGG" id="seg:SG2557"/>
<dbReference type="HOGENOM" id="CLU_025113_1_1_6"/>
<dbReference type="Proteomes" id="UP000008321">
    <property type="component" value="Chromosome"/>
</dbReference>
<dbReference type="GO" id="GO:0005737">
    <property type="term" value="C:cytoplasm"/>
    <property type="evidence" value="ECO:0007669"/>
    <property type="project" value="UniProtKB-SubCell"/>
</dbReference>
<dbReference type="GO" id="GO:0005524">
    <property type="term" value="F:ATP binding"/>
    <property type="evidence" value="ECO:0007669"/>
    <property type="project" value="UniProtKB-UniRule"/>
</dbReference>
<dbReference type="GO" id="GO:0004821">
    <property type="term" value="F:histidine-tRNA ligase activity"/>
    <property type="evidence" value="ECO:0007669"/>
    <property type="project" value="UniProtKB-UniRule"/>
</dbReference>
<dbReference type="GO" id="GO:0006427">
    <property type="term" value="P:histidyl-tRNA aminoacylation"/>
    <property type="evidence" value="ECO:0007669"/>
    <property type="project" value="UniProtKB-UniRule"/>
</dbReference>
<dbReference type="CDD" id="cd00773">
    <property type="entry name" value="HisRS-like_core"/>
    <property type="match status" value="1"/>
</dbReference>
<dbReference type="CDD" id="cd00859">
    <property type="entry name" value="HisRS_anticodon"/>
    <property type="match status" value="1"/>
</dbReference>
<dbReference type="FunFam" id="3.30.930.10:FF:000005">
    <property type="entry name" value="Histidine--tRNA ligase"/>
    <property type="match status" value="1"/>
</dbReference>
<dbReference type="FunFam" id="3.40.50.800:FF:000007">
    <property type="entry name" value="Histidine--tRNA ligase"/>
    <property type="match status" value="1"/>
</dbReference>
<dbReference type="Gene3D" id="3.40.50.800">
    <property type="entry name" value="Anticodon-binding domain"/>
    <property type="match status" value="1"/>
</dbReference>
<dbReference type="Gene3D" id="3.30.930.10">
    <property type="entry name" value="Bira Bifunctional Protein, Domain 2"/>
    <property type="match status" value="1"/>
</dbReference>
<dbReference type="HAMAP" id="MF_00127">
    <property type="entry name" value="His_tRNA_synth"/>
    <property type="match status" value="1"/>
</dbReference>
<dbReference type="InterPro" id="IPR006195">
    <property type="entry name" value="aa-tRNA-synth_II"/>
</dbReference>
<dbReference type="InterPro" id="IPR045864">
    <property type="entry name" value="aa-tRNA-synth_II/BPL/LPL"/>
</dbReference>
<dbReference type="InterPro" id="IPR004154">
    <property type="entry name" value="Anticodon-bd"/>
</dbReference>
<dbReference type="InterPro" id="IPR036621">
    <property type="entry name" value="Anticodon-bd_dom_sf"/>
</dbReference>
<dbReference type="InterPro" id="IPR015807">
    <property type="entry name" value="His-tRNA-ligase"/>
</dbReference>
<dbReference type="InterPro" id="IPR041715">
    <property type="entry name" value="HisRS-like_core"/>
</dbReference>
<dbReference type="InterPro" id="IPR004516">
    <property type="entry name" value="HisRS/HisZ"/>
</dbReference>
<dbReference type="InterPro" id="IPR033656">
    <property type="entry name" value="HisRS_anticodon"/>
</dbReference>
<dbReference type="NCBIfam" id="TIGR00442">
    <property type="entry name" value="hisS"/>
    <property type="match status" value="1"/>
</dbReference>
<dbReference type="PANTHER" id="PTHR43707:SF1">
    <property type="entry name" value="HISTIDINE--TRNA LIGASE, MITOCHONDRIAL-RELATED"/>
    <property type="match status" value="1"/>
</dbReference>
<dbReference type="PANTHER" id="PTHR43707">
    <property type="entry name" value="HISTIDYL-TRNA SYNTHETASE"/>
    <property type="match status" value="1"/>
</dbReference>
<dbReference type="Pfam" id="PF03129">
    <property type="entry name" value="HGTP_anticodon"/>
    <property type="match status" value="1"/>
</dbReference>
<dbReference type="Pfam" id="PF13393">
    <property type="entry name" value="tRNA-synt_His"/>
    <property type="match status" value="1"/>
</dbReference>
<dbReference type="PIRSF" id="PIRSF001549">
    <property type="entry name" value="His-tRNA_synth"/>
    <property type="match status" value="1"/>
</dbReference>
<dbReference type="SUPFAM" id="SSF52954">
    <property type="entry name" value="Class II aaRS ABD-related"/>
    <property type="match status" value="1"/>
</dbReference>
<dbReference type="SUPFAM" id="SSF55681">
    <property type="entry name" value="Class II aaRS and biotin synthetases"/>
    <property type="match status" value="1"/>
</dbReference>
<dbReference type="PROSITE" id="PS50862">
    <property type="entry name" value="AA_TRNA_LIGASE_II"/>
    <property type="match status" value="1"/>
</dbReference>